<accession>P31343</accession>
<reference key="1">
    <citation type="journal article" date="1989" name="Virus Res.">
        <title>Molecular cloning and sequencing of influenza virus A/Victoria/3/75 polymerase genes: sequence evolution and prediction of possible functional domains.</title>
        <authorList>
            <person name="de la Luna S."/>
            <person name="Martinez C."/>
            <person name="Ortin J."/>
        </authorList>
    </citation>
    <scope>NUCLEOTIDE SEQUENCE</scope>
</reference>
<reference key="2">
    <citation type="journal article" date="1998" name="J. Gen. Virol.">
        <title>The PA influenza virus polymerase subunit is a phosphorylated protein.</title>
        <authorList>
            <person name="Sanz-Ezquerro J.J."/>
            <person name="Fernandez-Santaren J."/>
            <person name="Sierra T."/>
            <person name="Aragon T."/>
            <person name="Ortega J."/>
            <person name="Ortin J."/>
            <person name="Smith G.L."/>
            <person name="Nieto A."/>
        </authorList>
    </citation>
    <scope>PHOSPHORYLATION</scope>
</reference>
<reference key="3">
    <citation type="journal article" date="2013" name="Nucleic Acids Res.">
        <title>Characterization of PA-N terminal domain of Influenza A polymerase reveals sequence specific RNA cleavage.</title>
        <authorList>
            <person name="Datta K."/>
            <person name="Wolkerstorfer A."/>
            <person name="Szolar O.H."/>
            <person name="Cusack S."/>
            <person name="Klumpp K."/>
        </authorList>
    </citation>
    <scope>FUNCTION</scope>
</reference>
<reference key="4">
    <citation type="journal article" date="2009" name="Nature">
        <title>The cap-snatching endonuclease of influenza virus polymerase resides in the PA subunit.</title>
        <authorList>
            <person name="Dias A."/>
            <person name="Bouvier D."/>
            <person name="Crepin T."/>
            <person name="McCarthy A.A."/>
            <person name="Hart D.J."/>
            <person name="Baudin F."/>
            <person name="Cusack S."/>
            <person name="Ruigrok R.W."/>
        </authorList>
    </citation>
    <scope>X-RAY CRYSTALLOGRAPHY (2.05 ANGSTROMS) OF 1-209</scope>
    <scope>FUNCTION</scope>
</reference>
<organismHost>
    <name type="scientific">Aves</name>
    <dbReference type="NCBI Taxonomy" id="8782"/>
</organismHost>
<organismHost>
    <name type="scientific">Cetacea</name>
    <name type="common">whales</name>
    <dbReference type="NCBI Taxonomy" id="9721"/>
</organismHost>
<organismHost>
    <name type="scientific">Homo sapiens</name>
    <name type="common">Human</name>
    <dbReference type="NCBI Taxonomy" id="9606"/>
</organismHost>
<organismHost>
    <name type="scientific">Phocidae</name>
    <name type="common">true seals</name>
    <dbReference type="NCBI Taxonomy" id="9709"/>
</organismHost>
<organismHost>
    <name type="scientific">Sus scrofa</name>
    <name type="common">Pig</name>
    <dbReference type="NCBI Taxonomy" id="9823"/>
</organismHost>
<keyword id="KW-0002">3D-structure</keyword>
<keyword id="KW-1157">Cap snatching</keyword>
<keyword id="KW-0255">Endonuclease</keyword>
<keyword id="KW-1262">Eukaryotic host gene expression shutoff by virus</keyword>
<keyword id="KW-1191">Eukaryotic host transcription shutoff by virus</keyword>
<keyword id="KW-1035">Host cytoplasm</keyword>
<keyword id="KW-1190">Host gene expression shutoff by virus</keyword>
<keyword id="KW-1048">Host nucleus</keyword>
<keyword id="KW-0945">Host-virus interaction</keyword>
<keyword id="KW-0378">Hydrolase</keyword>
<keyword id="KW-1104">Inhibition of host RNA polymerase II by virus</keyword>
<keyword id="KW-0464">Manganese</keyword>
<keyword id="KW-0479">Metal-binding</keyword>
<keyword id="KW-0540">Nuclease</keyword>
<keyword id="KW-0597">Phosphoprotein</keyword>
<keyword id="KW-0688">Ribosomal frameshifting</keyword>
<proteinExistence type="evidence at protein level"/>
<organism>
    <name type="scientific">Influenza A virus (strain A/Victoria/3/1975 H3N2)</name>
    <dbReference type="NCBI Taxonomy" id="392809"/>
    <lineage>
        <taxon>Viruses</taxon>
        <taxon>Riboviria</taxon>
        <taxon>Orthornavirae</taxon>
        <taxon>Negarnaviricota</taxon>
        <taxon>Polyploviricotina</taxon>
        <taxon>Insthoviricetes</taxon>
        <taxon>Articulavirales</taxon>
        <taxon>Orthomyxoviridae</taxon>
        <taxon>Alphainfluenzavirus</taxon>
        <taxon>Alphainfluenzavirus influenzae</taxon>
        <taxon>Influenza A virus</taxon>
    </lineage>
</organism>
<feature type="chain" id="PRO_0000078800" description="Polymerase acidic protein">
    <location>
        <begin position="1"/>
        <end position="716"/>
    </location>
</feature>
<feature type="short sequence motif" description="Nuclear localization signal 1 (NLS1)" evidence="1 2">
    <location>
        <begin position="124"/>
        <end position="139"/>
    </location>
</feature>
<feature type="short sequence motif" description="Nuclear localization signal 2 (NLS2)" evidence="1 2">
    <location>
        <begin position="184"/>
        <end position="247"/>
    </location>
</feature>
<feature type="binding site" evidence="2">
    <location>
        <position position="41"/>
    </location>
    <ligand>
        <name>Mn(2+)</name>
        <dbReference type="ChEBI" id="CHEBI:29035"/>
        <label>1</label>
    </ligand>
</feature>
<feature type="binding site" evidence="2">
    <location>
        <position position="80"/>
    </location>
    <ligand>
        <name>Mn(2+)</name>
        <dbReference type="ChEBI" id="CHEBI:29035"/>
        <label>2</label>
    </ligand>
</feature>
<feature type="binding site" evidence="2">
    <location>
        <position position="108"/>
    </location>
    <ligand>
        <name>Mn(2+)</name>
        <dbReference type="ChEBI" id="CHEBI:29035"/>
        <label>1</label>
    </ligand>
</feature>
<feature type="binding site" evidence="2">
    <location>
        <position position="108"/>
    </location>
    <ligand>
        <name>Mn(2+)</name>
        <dbReference type="ChEBI" id="CHEBI:29035"/>
        <label>2</label>
    </ligand>
</feature>
<feature type="binding site" evidence="2">
    <location>
        <position position="119"/>
    </location>
    <ligand>
        <name>Mn(2+)</name>
        <dbReference type="ChEBI" id="CHEBI:29035"/>
        <label>1</label>
    </ligand>
</feature>
<feature type="binding site" evidence="2">
    <location>
        <position position="120"/>
    </location>
    <ligand>
        <name>Mn(2+)</name>
        <dbReference type="ChEBI" id="CHEBI:29035"/>
        <label>1</label>
    </ligand>
</feature>
<feature type="helix" evidence="6">
    <location>
        <begin position="1"/>
        <end position="8"/>
    </location>
</feature>
<feature type="helix" evidence="6">
    <location>
        <begin position="11"/>
        <end position="23"/>
    </location>
</feature>
<feature type="turn" evidence="6">
    <location>
        <begin position="28"/>
        <end position="30"/>
    </location>
</feature>
<feature type="helix" evidence="6">
    <location>
        <begin position="32"/>
        <end position="49"/>
    </location>
</feature>
<feature type="helix" evidence="6">
    <location>
        <begin position="62"/>
        <end position="64"/>
    </location>
</feature>
<feature type="strand" evidence="6">
    <location>
        <begin position="75"/>
        <end position="78"/>
    </location>
</feature>
<feature type="helix" evidence="6">
    <location>
        <begin position="84"/>
        <end position="98"/>
    </location>
</feature>
<feature type="strand" evidence="6">
    <location>
        <begin position="108"/>
        <end position="111"/>
    </location>
</feature>
<feature type="turn" evidence="6">
    <location>
        <begin position="112"/>
        <end position="115"/>
    </location>
</feature>
<feature type="strand" evidence="6">
    <location>
        <begin position="116"/>
        <end position="125"/>
    </location>
</feature>
<feature type="helix" evidence="6">
    <location>
        <begin position="127"/>
        <end position="135"/>
    </location>
</feature>
<feature type="strand" evidence="6">
    <location>
        <begin position="144"/>
        <end position="149"/>
    </location>
</feature>
<feature type="strand" evidence="6">
    <location>
        <begin position="154"/>
        <end position="156"/>
    </location>
</feature>
<feature type="helix" evidence="6">
    <location>
        <begin position="157"/>
        <end position="159"/>
    </location>
</feature>
<feature type="helix" evidence="6">
    <location>
        <begin position="165"/>
        <end position="184"/>
    </location>
</feature>
<feature type="helix" evidence="6">
    <location>
        <begin position="188"/>
        <end position="193"/>
    </location>
</feature>
<evidence type="ECO:0000250" key="1">
    <source>
        <dbReference type="UniProtKB" id="P03433"/>
    </source>
</evidence>
<evidence type="ECO:0000255" key="2">
    <source>
        <dbReference type="HAMAP-Rule" id="MF_04063"/>
    </source>
</evidence>
<evidence type="ECO:0000269" key="3">
    <source>
    </source>
</evidence>
<evidence type="ECO:0000269" key="4">
    <source>
    </source>
</evidence>
<evidence type="ECO:0000269" key="5">
    <source>
    </source>
</evidence>
<evidence type="ECO:0007829" key="6">
    <source>
        <dbReference type="PDB" id="2W69"/>
    </source>
</evidence>
<sequence>MEDFVRQCFNPMIVELAEKAMKEYGEDLKIETNKFAAICTHLEVCFMYSDFHFINEQGESIVVELDDPNALLKHRFEIIEGRDRTMAWTVVNSICNTTGAEKPKFLPDLYDYKENRFIEIGVTRREVHIYYLEKANKIKSENTHIHIFSFTGEGMATKADYTLDEESRARIKTRLFTIRQEMANRGLWDSFRQSERGEETIEERFEITGTMRRLADQSLPPNFSCLENFRAYVDGFEPNGCIEGKLSQMSKEVNAKIEPFLKTTPRPIKLPDGPPCFQRSKFLLMDALKLSIEDPSHEGEGIPLYDAIKCMRTFFGWKEPYIVKPHERGINSNYLLSWKQVLAELQDIENEEKIPRTKNMKKTSQLKWALGENMAPEKVDFDNCRDISDLKQYDSDEPELRSLSSWIQNEFNKACELTDSIWIELDEIGEDVAPIEYIASMRRNYFTAEVSHCRATEYIMKGVYINTALLNASCAAMDDFQLIPMISKCRTKEGRRKTNLYGFIIKGRSHLRNDTDVVNFVSMEFSLTDPRLEPHKWEKYCVLEIGDMLLRSAIGQMSRPMFLYVRTNGTSKIKMKWGMEMRRCLLQSLQQIESMIEAESSVKEKDMTKEFFENKSETWPIGESPKGVEEGSIGKVCRTLLAKSVFNSLYASPQLEGFSAESRKLLLVVQALRDNLEPGTFDLGGLYEAIEECLINDPWVLLNASWFNSFLTHALR</sequence>
<protein>
    <recommendedName>
        <fullName evidence="2">Polymerase acidic protein</fullName>
        <ecNumber evidence="2">3.1.-.-</ecNumber>
    </recommendedName>
    <alternativeName>
        <fullName evidence="2">RNA-directed RNA polymerase subunit P2</fullName>
    </alternativeName>
</protein>
<comment type="function">
    <text evidence="2 3 4">Plays an essential role in viral RNA transcription and replication by forming the heterotrimeric polymerase complex together with PB1 and PB2 subunits. The complex transcribes viral mRNAs by using a unique mechanism called cap-snatching. It consists in the hijacking and cleavage of host capped pre-mRNAs. These short capped RNAs are then used as primers for viral mRNAs. The PB2 subunit is responsible for the binding of the 5' cap of cellular pre-mRNAs which are subsequently cleaved after 10-13 nucleotides by the PA subunit that carries the endonuclease activity.</text>
</comment>
<comment type="cofactor">
    <cofactor evidence="2">
        <name>Mn(2+)</name>
        <dbReference type="ChEBI" id="CHEBI:29035"/>
    </cofactor>
    <text evidence="2">Binds 2 manganese ions per subunit.</text>
</comment>
<comment type="subunit">
    <text evidence="1 2">Influenza RNA polymerase is composed of three subunits: PB1, PB2 and PA. Interacts (via C-terminus) with PB1 (via N-terminus).</text>
</comment>
<comment type="interaction">
    <interactant intactId="EBI-5800362">
        <id>P31343</id>
    </interactant>
    <interactant intactId="EBI-1104547">
        <id>Q9Y224</id>
        <label>RTRAF</label>
    </interactant>
    <organismsDiffer>true</organismsDiffer>
    <experiments>4</experiments>
</comment>
<comment type="subcellular location">
    <subcellularLocation>
        <location evidence="2">Host cytoplasm</location>
    </subcellularLocation>
    <subcellularLocation>
        <location evidence="2">Host nucleus</location>
    </subcellularLocation>
    <text evidence="1 2">PB1 and PA are transported in the host nucleus as a complex.</text>
</comment>
<comment type="alternative products">
    <event type="ribosomal frameshifting"/>
    <isoform>
        <id>P31343-1</id>
        <name>PA</name>
        <sequence type="displayed"/>
    </isoform>
    <isoform>
        <id>P31343-2</id>
        <name>PA-X</name>
        <sequence type="not described"/>
    </isoform>
</comment>
<comment type="PTM">
    <text evidence="2 5">Phosphorylated on serines and threonines by host kinases, including human casein kinase II.</text>
</comment>
<comment type="similarity">
    <text evidence="2">Belongs to the influenza viruses PA family.</text>
</comment>
<name>PA_I75A3</name>
<gene>
    <name evidence="2" type="primary">PA</name>
</gene>
<dbReference type="EC" id="3.1.-.-" evidence="2"/>
<dbReference type="PDB" id="2W69">
    <property type="method" value="X-ray"/>
    <property type="resolution" value="2.05 A"/>
    <property type="chains" value="A/B/D=1-209"/>
</dbReference>
<dbReference type="PDBsum" id="2W69"/>
<dbReference type="SMR" id="P31343"/>
<dbReference type="DIP" id="DIP-61895N"/>
<dbReference type="IntAct" id="P31343">
    <property type="interactions" value="4"/>
</dbReference>
<dbReference type="BindingDB" id="P31343"/>
<dbReference type="BRENDA" id="2.7.7.48">
    <property type="organism ID" value="7479"/>
</dbReference>
<dbReference type="EvolutionaryTrace" id="P31343"/>
<dbReference type="GO" id="GO:0030430">
    <property type="term" value="C:host cell cytoplasm"/>
    <property type="evidence" value="ECO:0007669"/>
    <property type="project" value="UniProtKB-SubCell"/>
</dbReference>
<dbReference type="GO" id="GO:0042025">
    <property type="term" value="C:host cell nucleus"/>
    <property type="evidence" value="ECO:0007669"/>
    <property type="project" value="UniProtKB-SubCell"/>
</dbReference>
<dbReference type="GO" id="GO:0004519">
    <property type="term" value="F:endonuclease activity"/>
    <property type="evidence" value="ECO:0007669"/>
    <property type="project" value="UniProtKB-KW"/>
</dbReference>
<dbReference type="GO" id="GO:0046872">
    <property type="term" value="F:metal ion binding"/>
    <property type="evidence" value="ECO:0007669"/>
    <property type="project" value="UniProtKB-KW"/>
</dbReference>
<dbReference type="GO" id="GO:0003723">
    <property type="term" value="F:RNA binding"/>
    <property type="evidence" value="ECO:0007669"/>
    <property type="project" value="UniProtKB-UniRule"/>
</dbReference>
<dbReference type="GO" id="GO:0075526">
    <property type="term" value="P:cap snatching"/>
    <property type="evidence" value="ECO:0007669"/>
    <property type="project" value="UniProtKB-UniRule"/>
</dbReference>
<dbReference type="GO" id="GO:0006351">
    <property type="term" value="P:DNA-templated transcription"/>
    <property type="evidence" value="ECO:0007669"/>
    <property type="project" value="UniProtKB-UniRule"/>
</dbReference>
<dbReference type="GO" id="GO:0039657">
    <property type="term" value="P:symbiont-mediated suppression of host gene expression"/>
    <property type="evidence" value="ECO:0007669"/>
    <property type="project" value="UniProtKB-KW"/>
</dbReference>
<dbReference type="GO" id="GO:0039523">
    <property type="term" value="P:symbiont-mediated suppression of host mRNA transcription via inhibition of RNA polymerase II activity"/>
    <property type="evidence" value="ECO:0007669"/>
    <property type="project" value="UniProtKB-UniRule"/>
</dbReference>
<dbReference type="GO" id="GO:0039694">
    <property type="term" value="P:viral RNA genome replication"/>
    <property type="evidence" value="ECO:0007669"/>
    <property type="project" value="InterPro"/>
</dbReference>
<dbReference type="GO" id="GO:0075523">
    <property type="term" value="P:viral translational frameshifting"/>
    <property type="evidence" value="ECO:0007669"/>
    <property type="project" value="UniProtKB-KW"/>
</dbReference>
<dbReference type="FunFam" id="3.40.91.90:FF:000001">
    <property type="entry name" value="Polymerase acidic protein"/>
    <property type="match status" value="1"/>
</dbReference>
<dbReference type="Gene3D" id="3.40.91.90">
    <property type="entry name" value="Influenza RNA-dependent RNA polymerase subunit PA, endonuclease domain"/>
    <property type="match status" value="1"/>
</dbReference>
<dbReference type="HAMAP" id="MF_04063">
    <property type="entry name" value="INFV_PA"/>
    <property type="match status" value="1"/>
</dbReference>
<dbReference type="InterPro" id="IPR037534">
    <property type="entry name" value="INFV_PA"/>
</dbReference>
<dbReference type="InterPro" id="IPR001009">
    <property type="entry name" value="PA/PA-X"/>
</dbReference>
<dbReference type="InterPro" id="IPR038372">
    <property type="entry name" value="PA/PA-X_sf"/>
</dbReference>
<dbReference type="Pfam" id="PF00603">
    <property type="entry name" value="Flu_PA"/>
    <property type="match status" value="1"/>
</dbReference>